<accession>Q9FPS0</accession>
<accession>Q3E9N3</accession>
<accession>Q9SVC0</accession>
<feature type="chain" id="PRO_0000313052" description="Ubiquitin carboxyl-terminal hydrolase 27">
    <location>
        <begin position="1"/>
        <end position="494"/>
    </location>
</feature>
<feature type="transmembrane region" description="Helical" evidence="2">
    <location>
        <begin position="30"/>
        <end position="50"/>
    </location>
</feature>
<feature type="domain" description="USP">
    <location>
        <begin position="74"/>
        <end position="494"/>
    </location>
</feature>
<feature type="active site" description="Nucleophile" evidence="3">
    <location>
        <position position="83"/>
    </location>
</feature>
<feature type="active site" description="Proton acceptor" evidence="3">
    <location>
        <position position="440"/>
    </location>
</feature>
<feature type="splice variant" id="VSP_029992" description="In isoform 2." evidence="4">
    <original>TEIEKLRSCGGEDQCDCKTSLHLQRMPWSNSYSHILKQLIIARFPKLL</original>
    <variation>VVNLSQLLMLLYFSFVHASRLYLTRVSWKRFQSDGNRKAQELWRRGPM</variation>
    <location>
        <begin position="314"/>
        <end position="361"/>
    </location>
</feature>
<feature type="splice variant" id="VSP_029993" description="In isoform 2." evidence="4">
    <location>
        <begin position="362"/>
        <end position="494"/>
    </location>
</feature>
<sequence length="494" mass="55771">MVSRRGSETKAIVCVLTDRIRISNQWVSHLSFAGLLGVAGFVFAQQHGLFRNLNNLKLFSGREKDSGDDSFLVPGLQNLGNNCFLNVILQALASCKDFRSFLQWVLEDARGSLAGEQEEQLPLTFALSALLQELGTVGSRRSVSNPRKVMVTLTDYAKNFNLTSQQDAAEALLHLISSLQEEIVVCYRPSQSSNLSDILFSRNLRMLAPSEGLHGLMELKRWHKHLRGPFDGILGSTLMCRTCSSQISLEFQFFHTLPLSPLLHHGGYNIMSGCTLEHCLKKFLNTEKVENYFCYRCWHGAALKYLSVIGAAETEIEKLRSCGGEDQCDCKTSLHLQRMPWSNSYSHILKQLIIARFPKLLCIQVQRASFNMFEEFKLSGHIAFPLVLNLSLFTPSSIGVNIEERIEMSSEYQKPEASKNHGMYRLVTVVEHFGRTGSGHYTVYRSVRVFSQEEEEEDCDEDLSWFSISDSEVCRVSESDVLGAEASLLFYERL</sequence>
<dbReference type="EC" id="3.4.19.12"/>
<dbReference type="EMBL" id="AF302675">
    <property type="protein sequence ID" value="AAG42765.1"/>
    <property type="molecule type" value="mRNA"/>
</dbReference>
<dbReference type="EMBL" id="AL078620">
    <property type="protein sequence ID" value="CAB52824.1"/>
    <property type="status" value="ALT_SEQ"/>
    <property type="molecule type" value="Genomic_DNA"/>
</dbReference>
<dbReference type="EMBL" id="AL161595">
    <property type="protein sequence ID" value="CAB80600.1"/>
    <property type="status" value="ALT_SEQ"/>
    <property type="molecule type" value="Genomic_DNA"/>
</dbReference>
<dbReference type="EMBL" id="CP002687">
    <property type="protein sequence ID" value="AEE87062.1"/>
    <property type="molecule type" value="Genomic_DNA"/>
</dbReference>
<dbReference type="EMBL" id="AF370208">
    <property type="protein sequence ID" value="AAK44023.1"/>
    <property type="molecule type" value="mRNA"/>
</dbReference>
<dbReference type="EMBL" id="AY133770">
    <property type="protein sequence ID" value="AAM91704.1"/>
    <property type="molecule type" value="mRNA"/>
</dbReference>
<dbReference type="PIR" id="B85466">
    <property type="entry name" value="B85466"/>
</dbReference>
<dbReference type="RefSeq" id="NP_568058.1">
    <molecule id="Q9FPS0-1"/>
    <property type="nucleotide sequence ID" value="NM_120097.3"/>
</dbReference>
<dbReference type="SMR" id="Q9FPS0"/>
<dbReference type="BioGRID" id="15372">
    <property type="interactions" value="1"/>
</dbReference>
<dbReference type="FunCoup" id="Q9FPS0">
    <property type="interactions" value="590"/>
</dbReference>
<dbReference type="STRING" id="3702.Q9FPS0"/>
<dbReference type="MEROPS" id="C19.002"/>
<dbReference type="iPTMnet" id="Q9FPS0"/>
<dbReference type="PaxDb" id="3702-AT4G39370.3"/>
<dbReference type="ProteomicsDB" id="234094">
    <molecule id="Q9FPS0-1"/>
</dbReference>
<dbReference type="EnsemblPlants" id="AT4G39370.1">
    <molecule id="Q9FPS0-1"/>
    <property type="protein sequence ID" value="AT4G39370.1"/>
    <property type="gene ID" value="AT4G39370"/>
</dbReference>
<dbReference type="GeneID" id="830092"/>
<dbReference type="Gramene" id="AT4G39370.1">
    <molecule id="Q9FPS0-1"/>
    <property type="protein sequence ID" value="AT4G39370.1"/>
    <property type="gene ID" value="AT4G39370"/>
</dbReference>
<dbReference type="KEGG" id="ath:AT4G39370"/>
<dbReference type="Araport" id="AT4G39370"/>
<dbReference type="TAIR" id="AT4G39370">
    <property type="gene designation" value="UBP27"/>
</dbReference>
<dbReference type="eggNOG" id="KOG1868">
    <property type="taxonomic scope" value="Eukaryota"/>
</dbReference>
<dbReference type="HOGENOM" id="CLU_008279_14_0_1"/>
<dbReference type="InParanoid" id="Q9FPS0"/>
<dbReference type="OMA" id="CEREGND"/>
<dbReference type="OrthoDB" id="2248014at2759"/>
<dbReference type="PhylomeDB" id="Q9FPS0"/>
<dbReference type="PRO" id="PR:Q9FPS0"/>
<dbReference type="Proteomes" id="UP000006548">
    <property type="component" value="Chromosome 4"/>
</dbReference>
<dbReference type="ExpressionAtlas" id="Q9FPS0">
    <property type="expression patterns" value="baseline and differential"/>
</dbReference>
<dbReference type="GO" id="GO:0016020">
    <property type="term" value="C:membrane"/>
    <property type="evidence" value="ECO:0007669"/>
    <property type="project" value="UniProtKB-SubCell"/>
</dbReference>
<dbReference type="GO" id="GO:0004843">
    <property type="term" value="F:cysteine-type deubiquitinase activity"/>
    <property type="evidence" value="ECO:0007669"/>
    <property type="project" value="UniProtKB-EC"/>
</dbReference>
<dbReference type="GO" id="GO:0016579">
    <property type="term" value="P:protein deubiquitination"/>
    <property type="evidence" value="ECO:0007669"/>
    <property type="project" value="InterPro"/>
</dbReference>
<dbReference type="GO" id="GO:0006508">
    <property type="term" value="P:proteolysis"/>
    <property type="evidence" value="ECO:0007669"/>
    <property type="project" value="UniProtKB-KW"/>
</dbReference>
<dbReference type="CDD" id="cd02662">
    <property type="entry name" value="Peptidase_C19F"/>
    <property type="match status" value="1"/>
</dbReference>
<dbReference type="Gene3D" id="3.90.70.10">
    <property type="entry name" value="Cysteine proteinases"/>
    <property type="match status" value="1"/>
</dbReference>
<dbReference type="InterPro" id="IPR038765">
    <property type="entry name" value="Papain-like_cys_pep_sf"/>
</dbReference>
<dbReference type="InterPro" id="IPR050164">
    <property type="entry name" value="Peptidase_C19"/>
</dbReference>
<dbReference type="InterPro" id="IPR001394">
    <property type="entry name" value="Peptidase_C19_UCH"/>
</dbReference>
<dbReference type="InterPro" id="IPR018200">
    <property type="entry name" value="USP_CS"/>
</dbReference>
<dbReference type="InterPro" id="IPR028889">
    <property type="entry name" value="USP_dom"/>
</dbReference>
<dbReference type="PANTHER" id="PTHR24006">
    <property type="entry name" value="UBIQUITIN CARBOXYL-TERMINAL HYDROLASE"/>
    <property type="match status" value="1"/>
</dbReference>
<dbReference type="PANTHER" id="PTHR24006:SF888">
    <property type="entry name" value="UBIQUITIN CARBOXYL-TERMINAL HYDROLASE 30"/>
    <property type="match status" value="1"/>
</dbReference>
<dbReference type="Pfam" id="PF00443">
    <property type="entry name" value="UCH"/>
    <property type="match status" value="1"/>
</dbReference>
<dbReference type="SUPFAM" id="SSF54001">
    <property type="entry name" value="Cysteine proteinases"/>
    <property type="match status" value="1"/>
</dbReference>
<dbReference type="PROSITE" id="PS00972">
    <property type="entry name" value="USP_1"/>
    <property type="match status" value="1"/>
</dbReference>
<dbReference type="PROSITE" id="PS50235">
    <property type="entry name" value="USP_3"/>
    <property type="match status" value="1"/>
</dbReference>
<organism>
    <name type="scientific">Arabidopsis thaliana</name>
    <name type="common">Mouse-ear cress</name>
    <dbReference type="NCBI Taxonomy" id="3702"/>
    <lineage>
        <taxon>Eukaryota</taxon>
        <taxon>Viridiplantae</taxon>
        <taxon>Streptophyta</taxon>
        <taxon>Embryophyta</taxon>
        <taxon>Tracheophyta</taxon>
        <taxon>Spermatophyta</taxon>
        <taxon>Magnoliopsida</taxon>
        <taxon>eudicotyledons</taxon>
        <taxon>Gunneridae</taxon>
        <taxon>Pentapetalae</taxon>
        <taxon>rosids</taxon>
        <taxon>malvids</taxon>
        <taxon>Brassicales</taxon>
        <taxon>Brassicaceae</taxon>
        <taxon>Camelineae</taxon>
        <taxon>Arabidopsis</taxon>
    </lineage>
</organism>
<evidence type="ECO:0000250" key="1"/>
<evidence type="ECO:0000255" key="2"/>
<evidence type="ECO:0000255" key="3">
    <source>
        <dbReference type="PROSITE-ProRule" id="PRU10092"/>
    </source>
</evidence>
<evidence type="ECO:0000305" key="4"/>
<reference key="1">
    <citation type="journal article" date="2000" name="Plant Physiol.">
        <title>The ubiquitin-specific protease family from Arabidopsis. AtUBP1 and 2 are required for the resistance to the amino acid analog canavanine.</title>
        <authorList>
            <person name="Yan N."/>
            <person name="Doelling J.H."/>
            <person name="Falbel T.G."/>
            <person name="Durski A.M."/>
            <person name="Vierstra R.D."/>
        </authorList>
    </citation>
    <scope>NUCLEOTIDE SEQUENCE [MRNA]</scope>
    <scope>GENE FAMILY ORGANIZATION</scope>
    <scope>NOMENCLATURE (ISOFORM 1)</scope>
    <source>
        <strain>cv. Columbia</strain>
    </source>
</reference>
<reference key="2">
    <citation type="journal article" date="1999" name="Nature">
        <title>Sequence and analysis of chromosome 4 of the plant Arabidopsis thaliana.</title>
        <authorList>
            <person name="Mayer K.F.X."/>
            <person name="Schueller C."/>
            <person name="Wambutt R."/>
            <person name="Murphy G."/>
            <person name="Volckaert G."/>
            <person name="Pohl T."/>
            <person name="Duesterhoeft A."/>
            <person name="Stiekema W."/>
            <person name="Entian K.-D."/>
            <person name="Terryn N."/>
            <person name="Harris B."/>
            <person name="Ansorge W."/>
            <person name="Brandt P."/>
            <person name="Grivell L.A."/>
            <person name="Rieger M."/>
            <person name="Weichselgartner M."/>
            <person name="de Simone V."/>
            <person name="Obermaier B."/>
            <person name="Mache R."/>
            <person name="Mueller M."/>
            <person name="Kreis M."/>
            <person name="Delseny M."/>
            <person name="Puigdomenech P."/>
            <person name="Watson M."/>
            <person name="Schmidtheini T."/>
            <person name="Reichert B."/>
            <person name="Portetelle D."/>
            <person name="Perez-Alonso M."/>
            <person name="Boutry M."/>
            <person name="Bancroft I."/>
            <person name="Vos P."/>
            <person name="Hoheisel J."/>
            <person name="Zimmermann W."/>
            <person name="Wedler H."/>
            <person name="Ridley P."/>
            <person name="Langham S.-A."/>
            <person name="McCullagh B."/>
            <person name="Bilham L."/>
            <person name="Robben J."/>
            <person name="van der Schueren J."/>
            <person name="Grymonprez B."/>
            <person name="Chuang Y.-J."/>
            <person name="Vandenbussche F."/>
            <person name="Braeken M."/>
            <person name="Weltjens I."/>
            <person name="Voet M."/>
            <person name="Bastiaens I."/>
            <person name="Aert R."/>
            <person name="Defoor E."/>
            <person name="Weitzenegger T."/>
            <person name="Bothe G."/>
            <person name="Ramsperger U."/>
            <person name="Hilbert H."/>
            <person name="Braun M."/>
            <person name="Holzer E."/>
            <person name="Brandt A."/>
            <person name="Peters S."/>
            <person name="van Staveren M."/>
            <person name="Dirkse W."/>
            <person name="Mooijman P."/>
            <person name="Klein Lankhorst R."/>
            <person name="Rose M."/>
            <person name="Hauf J."/>
            <person name="Koetter P."/>
            <person name="Berneiser S."/>
            <person name="Hempel S."/>
            <person name="Feldpausch M."/>
            <person name="Lamberth S."/>
            <person name="Van den Daele H."/>
            <person name="De Keyser A."/>
            <person name="Buysshaert C."/>
            <person name="Gielen J."/>
            <person name="Villarroel R."/>
            <person name="De Clercq R."/>
            <person name="van Montagu M."/>
            <person name="Rogers J."/>
            <person name="Cronin A."/>
            <person name="Quail M.A."/>
            <person name="Bray-Allen S."/>
            <person name="Clark L."/>
            <person name="Doggett J."/>
            <person name="Hall S."/>
            <person name="Kay M."/>
            <person name="Lennard N."/>
            <person name="McLay K."/>
            <person name="Mayes R."/>
            <person name="Pettett A."/>
            <person name="Rajandream M.A."/>
            <person name="Lyne M."/>
            <person name="Benes V."/>
            <person name="Rechmann S."/>
            <person name="Borkova D."/>
            <person name="Bloecker H."/>
            <person name="Scharfe M."/>
            <person name="Grimm M."/>
            <person name="Loehnert T.-H."/>
            <person name="Dose S."/>
            <person name="de Haan M."/>
            <person name="Maarse A.C."/>
            <person name="Schaefer M."/>
            <person name="Mueller-Auer S."/>
            <person name="Gabel C."/>
            <person name="Fuchs M."/>
            <person name="Fartmann B."/>
            <person name="Granderath K."/>
            <person name="Dauner D."/>
            <person name="Herzl A."/>
            <person name="Neumann S."/>
            <person name="Argiriou A."/>
            <person name="Vitale D."/>
            <person name="Liguori R."/>
            <person name="Piravandi E."/>
            <person name="Massenet O."/>
            <person name="Quigley F."/>
            <person name="Clabauld G."/>
            <person name="Muendlein A."/>
            <person name="Felber R."/>
            <person name="Schnabl S."/>
            <person name="Hiller R."/>
            <person name="Schmidt W."/>
            <person name="Lecharny A."/>
            <person name="Aubourg S."/>
            <person name="Chefdor F."/>
            <person name="Cooke R."/>
            <person name="Berger C."/>
            <person name="Monfort A."/>
            <person name="Casacuberta E."/>
            <person name="Gibbons T."/>
            <person name="Weber N."/>
            <person name="Vandenbol M."/>
            <person name="Bargues M."/>
            <person name="Terol J."/>
            <person name="Torres A."/>
            <person name="Perez-Perez A."/>
            <person name="Purnelle B."/>
            <person name="Bent E."/>
            <person name="Johnson S."/>
            <person name="Tacon D."/>
            <person name="Jesse T."/>
            <person name="Heijnen L."/>
            <person name="Schwarz S."/>
            <person name="Scholler P."/>
            <person name="Heber S."/>
            <person name="Francs P."/>
            <person name="Bielke C."/>
            <person name="Frishman D."/>
            <person name="Haase D."/>
            <person name="Lemcke K."/>
            <person name="Mewes H.-W."/>
            <person name="Stocker S."/>
            <person name="Zaccaria P."/>
            <person name="Bevan M."/>
            <person name="Wilson R.K."/>
            <person name="de la Bastide M."/>
            <person name="Habermann K."/>
            <person name="Parnell L."/>
            <person name="Dedhia N."/>
            <person name="Gnoj L."/>
            <person name="Schutz K."/>
            <person name="Huang E."/>
            <person name="Spiegel L."/>
            <person name="Sekhon M."/>
            <person name="Murray J."/>
            <person name="Sheet P."/>
            <person name="Cordes M."/>
            <person name="Abu-Threideh J."/>
            <person name="Stoneking T."/>
            <person name="Kalicki J."/>
            <person name="Graves T."/>
            <person name="Harmon G."/>
            <person name="Edwards J."/>
            <person name="Latreille P."/>
            <person name="Courtney L."/>
            <person name="Cloud J."/>
            <person name="Abbott A."/>
            <person name="Scott K."/>
            <person name="Johnson D."/>
            <person name="Minx P."/>
            <person name="Bentley D."/>
            <person name="Fulton B."/>
            <person name="Miller N."/>
            <person name="Greco T."/>
            <person name="Kemp K."/>
            <person name="Kramer J."/>
            <person name="Fulton L."/>
            <person name="Mardis E."/>
            <person name="Dante M."/>
            <person name="Pepin K."/>
            <person name="Hillier L.W."/>
            <person name="Nelson J."/>
            <person name="Spieth J."/>
            <person name="Ryan E."/>
            <person name="Andrews S."/>
            <person name="Geisel C."/>
            <person name="Layman D."/>
            <person name="Du H."/>
            <person name="Ali J."/>
            <person name="Berghoff A."/>
            <person name="Jones K."/>
            <person name="Drone K."/>
            <person name="Cotton M."/>
            <person name="Joshu C."/>
            <person name="Antonoiu B."/>
            <person name="Zidanic M."/>
            <person name="Strong C."/>
            <person name="Sun H."/>
            <person name="Lamar B."/>
            <person name="Yordan C."/>
            <person name="Ma P."/>
            <person name="Zhong J."/>
            <person name="Preston R."/>
            <person name="Vil D."/>
            <person name="Shekher M."/>
            <person name="Matero A."/>
            <person name="Shah R."/>
            <person name="Swaby I.K."/>
            <person name="O'Shaughnessy A."/>
            <person name="Rodriguez M."/>
            <person name="Hoffman J."/>
            <person name="Till S."/>
            <person name="Granat S."/>
            <person name="Shohdy N."/>
            <person name="Hasegawa A."/>
            <person name="Hameed A."/>
            <person name="Lodhi M."/>
            <person name="Johnson A."/>
            <person name="Chen E."/>
            <person name="Marra M.A."/>
            <person name="Martienssen R."/>
            <person name="McCombie W.R."/>
        </authorList>
    </citation>
    <scope>NUCLEOTIDE SEQUENCE [LARGE SCALE GENOMIC DNA]</scope>
    <source>
        <strain>cv. Columbia</strain>
    </source>
</reference>
<reference key="3">
    <citation type="journal article" date="2017" name="Plant J.">
        <title>Araport11: a complete reannotation of the Arabidopsis thaliana reference genome.</title>
        <authorList>
            <person name="Cheng C.Y."/>
            <person name="Krishnakumar V."/>
            <person name="Chan A.P."/>
            <person name="Thibaud-Nissen F."/>
            <person name="Schobel S."/>
            <person name="Town C.D."/>
        </authorList>
    </citation>
    <scope>GENOME REANNOTATION</scope>
    <source>
        <strain>cv. Columbia</strain>
    </source>
</reference>
<reference key="4">
    <citation type="journal article" date="2003" name="Science">
        <title>Empirical analysis of transcriptional activity in the Arabidopsis genome.</title>
        <authorList>
            <person name="Yamada K."/>
            <person name="Lim J."/>
            <person name="Dale J.M."/>
            <person name="Chen H."/>
            <person name="Shinn P."/>
            <person name="Palm C.J."/>
            <person name="Southwick A.M."/>
            <person name="Wu H.C."/>
            <person name="Kim C.J."/>
            <person name="Nguyen M."/>
            <person name="Pham P.K."/>
            <person name="Cheuk R.F."/>
            <person name="Karlin-Newmann G."/>
            <person name="Liu S.X."/>
            <person name="Lam B."/>
            <person name="Sakano H."/>
            <person name="Wu T."/>
            <person name="Yu G."/>
            <person name="Miranda M."/>
            <person name="Quach H.L."/>
            <person name="Tripp M."/>
            <person name="Chang C.H."/>
            <person name="Lee J.M."/>
            <person name="Toriumi M.J."/>
            <person name="Chan M.M."/>
            <person name="Tang C.C."/>
            <person name="Onodera C.S."/>
            <person name="Deng J.M."/>
            <person name="Akiyama K."/>
            <person name="Ansari Y."/>
            <person name="Arakawa T."/>
            <person name="Banh J."/>
            <person name="Banno F."/>
            <person name="Bowser L."/>
            <person name="Brooks S.Y."/>
            <person name="Carninci P."/>
            <person name="Chao Q."/>
            <person name="Choy N."/>
            <person name="Enju A."/>
            <person name="Goldsmith A.D."/>
            <person name="Gurjal M."/>
            <person name="Hansen N.F."/>
            <person name="Hayashizaki Y."/>
            <person name="Johnson-Hopson C."/>
            <person name="Hsuan V.W."/>
            <person name="Iida K."/>
            <person name="Karnes M."/>
            <person name="Khan S."/>
            <person name="Koesema E."/>
            <person name="Ishida J."/>
            <person name="Jiang P.X."/>
            <person name="Jones T."/>
            <person name="Kawai J."/>
            <person name="Kamiya A."/>
            <person name="Meyers C."/>
            <person name="Nakajima M."/>
            <person name="Narusaka M."/>
            <person name="Seki M."/>
            <person name="Sakurai T."/>
            <person name="Satou M."/>
            <person name="Tamse R."/>
            <person name="Vaysberg M."/>
            <person name="Wallender E.K."/>
            <person name="Wong C."/>
            <person name="Yamamura Y."/>
            <person name="Yuan S."/>
            <person name="Shinozaki K."/>
            <person name="Davis R.W."/>
            <person name="Theologis A."/>
            <person name="Ecker J.R."/>
        </authorList>
    </citation>
    <scope>NUCLEOTIDE SEQUENCE [LARGE SCALE MRNA] (ISOFORM 1)</scope>
    <source>
        <strain>cv. Columbia</strain>
    </source>
</reference>
<gene>
    <name type="primary">UBP27</name>
    <name type="ordered locus">At4g39370</name>
    <name type="ORF">F23K16.5</name>
</gene>
<keyword id="KW-0025">Alternative splicing</keyword>
<keyword id="KW-0378">Hydrolase</keyword>
<keyword id="KW-0472">Membrane</keyword>
<keyword id="KW-0645">Protease</keyword>
<keyword id="KW-1185">Reference proteome</keyword>
<keyword id="KW-0788">Thiol protease</keyword>
<keyword id="KW-0812">Transmembrane</keyword>
<keyword id="KW-1133">Transmembrane helix</keyword>
<keyword id="KW-0833">Ubl conjugation pathway</keyword>
<name>UBP27_ARATH</name>
<comment type="function">
    <text evidence="1">Recognizes and hydrolyzes the peptide bond at the C-terminal Gly of ubiquitin. Involved in the processing of poly-ubiquitin precursors as well as that of ubiquitinated proteins (By similarity).</text>
</comment>
<comment type="catalytic activity">
    <reaction>
        <text>Thiol-dependent hydrolysis of ester, thioester, amide, peptide and isopeptide bonds formed by the C-terminal Gly of ubiquitin (a 76-residue protein attached to proteins as an intracellular targeting signal).</text>
        <dbReference type="EC" id="3.4.19.12"/>
    </reaction>
</comment>
<comment type="subcellular location">
    <subcellularLocation>
        <location evidence="4">Membrane</location>
        <topology evidence="4">Single-pass membrane protein</topology>
    </subcellularLocation>
</comment>
<comment type="alternative products">
    <event type="alternative splicing"/>
    <isoform>
        <id>Q9FPS0-1</id>
        <name>1</name>
        <sequence type="displayed"/>
    </isoform>
    <isoform>
        <id>Q9FPS0-2</id>
        <name>2</name>
        <sequence type="described" ref="VSP_029992 VSP_029993"/>
    </isoform>
</comment>
<comment type="miscellaneous">
    <molecule>Isoform 2</molecule>
    <text evidence="4">May be due to an intron retention.</text>
</comment>
<comment type="similarity">
    <text evidence="4">Belongs to the peptidase C19 family.</text>
</comment>
<comment type="sequence caution" evidence="4">
    <conflict type="erroneous gene model prediction">
        <sequence resource="EMBL-CDS" id="CAB52824"/>
    </conflict>
</comment>
<comment type="sequence caution" evidence="4">
    <conflict type="erroneous gene model prediction">
        <sequence resource="EMBL-CDS" id="CAB80600"/>
    </conflict>
</comment>
<protein>
    <recommendedName>
        <fullName>Ubiquitin carboxyl-terminal hydrolase 27</fullName>
        <ecNumber>3.4.19.12</ecNumber>
    </recommendedName>
    <alternativeName>
        <fullName>Deubiquitinating enzyme 27</fullName>
        <shortName>AtUBP27</shortName>
    </alternativeName>
    <alternativeName>
        <fullName>Ubiquitin thioesterase 27</fullName>
    </alternativeName>
    <alternativeName>
        <fullName>Ubiquitin-specific-processing protease 27</fullName>
    </alternativeName>
</protein>
<proteinExistence type="evidence at transcript level"/>